<proteinExistence type="inferred from homology"/>
<dbReference type="EMBL" id="AAHF01000003">
    <property type="protein sequence ID" value="EAL91919.1"/>
    <property type="molecule type" value="Genomic_DNA"/>
</dbReference>
<dbReference type="RefSeq" id="XP_753957.1">
    <property type="nucleotide sequence ID" value="XM_748864.1"/>
</dbReference>
<dbReference type="SMR" id="Q4WU07"/>
<dbReference type="FunCoup" id="Q4WU07">
    <property type="interactions" value="175"/>
</dbReference>
<dbReference type="STRING" id="330879.Q4WU07"/>
<dbReference type="EnsemblFungi" id="EAL91919">
    <property type="protein sequence ID" value="EAL91919"/>
    <property type="gene ID" value="AFUA_5G06760"/>
</dbReference>
<dbReference type="GeneID" id="3510730"/>
<dbReference type="KEGG" id="afm:AFUA_5G06760"/>
<dbReference type="VEuPathDB" id="FungiDB:Afu5g06760"/>
<dbReference type="eggNOG" id="KOG0118">
    <property type="taxonomic scope" value="Eukaryota"/>
</dbReference>
<dbReference type="HOGENOM" id="CLU_043308_1_0_1"/>
<dbReference type="InParanoid" id="Q4WU07"/>
<dbReference type="OMA" id="CNIAKDS"/>
<dbReference type="OrthoDB" id="10251848at2759"/>
<dbReference type="Proteomes" id="UP000002530">
    <property type="component" value="Chromosome 5"/>
</dbReference>
<dbReference type="GO" id="GO:0071014">
    <property type="term" value="C:post-mRNA release spliceosomal complex"/>
    <property type="evidence" value="ECO:0007669"/>
    <property type="project" value="EnsemblFungi"/>
</dbReference>
<dbReference type="GO" id="GO:0000974">
    <property type="term" value="C:Prp19 complex"/>
    <property type="evidence" value="ECO:0000250"/>
    <property type="project" value="UniProtKB"/>
</dbReference>
<dbReference type="GO" id="GO:0071006">
    <property type="term" value="C:U2-type catalytic step 1 spliceosome"/>
    <property type="evidence" value="ECO:0000318"/>
    <property type="project" value="GO_Central"/>
</dbReference>
<dbReference type="GO" id="GO:0071007">
    <property type="term" value="C:U2-type catalytic step 2 spliceosome"/>
    <property type="evidence" value="ECO:0000318"/>
    <property type="project" value="GO_Central"/>
</dbReference>
<dbReference type="GO" id="GO:0036002">
    <property type="term" value="F:pre-mRNA binding"/>
    <property type="evidence" value="ECO:0000250"/>
    <property type="project" value="UniProtKB"/>
</dbReference>
<dbReference type="GO" id="GO:0017070">
    <property type="term" value="F:U6 snRNA binding"/>
    <property type="evidence" value="ECO:0000250"/>
    <property type="project" value="UniProtKB"/>
</dbReference>
<dbReference type="GO" id="GO:0008270">
    <property type="term" value="F:zinc ion binding"/>
    <property type="evidence" value="ECO:0007669"/>
    <property type="project" value="UniProtKB-KW"/>
</dbReference>
<dbReference type="GO" id="GO:0045292">
    <property type="term" value="P:mRNA cis splicing, via spliceosome"/>
    <property type="evidence" value="ECO:0000250"/>
    <property type="project" value="UniProtKB"/>
</dbReference>
<dbReference type="GO" id="GO:0045787">
    <property type="term" value="P:positive regulation of cell cycle"/>
    <property type="evidence" value="ECO:0000250"/>
    <property type="project" value="UniProtKB"/>
</dbReference>
<dbReference type="GO" id="GO:0033120">
    <property type="term" value="P:positive regulation of RNA splicing"/>
    <property type="evidence" value="ECO:0000250"/>
    <property type="project" value="UniProtKB"/>
</dbReference>
<dbReference type="GO" id="GO:0000387">
    <property type="term" value="P:spliceosomal snRNP assembly"/>
    <property type="evidence" value="ECO:0000250"/>
    <property type="project" value="UniProtKB"/>
</dbReference>
<dbReference type="CDD" id="cd12360">
    <property type="entry name" value="RRM_cwf2"/>
    <property type="match status" value="1"/>
</dbReference>
<dbReference type="FunFam" id="3.30.70.330:FF:000249">
    <property type="entry name" value="Pre-mRNA-splicing factor CWC2, variant"/>
    <property type="match status" value="1"/>
</dbReference>
<dbReference type="Gene3D" id="3.30.70.330">
    <property type="match status" value="1"/>
</dbReference>
<dbReference type="InterPro" id="IPR039171">
    <property type="entry name" value="Cwc2/Slt11"/>
</dbReference>
<dbReference type="InterPro" id="IPR034181">
    <property type="entry name" value="Cwc2_RRM"/>
</dbReference>
<dbReference type="InterPro" id="IPR012677">
    <property type="entry name" value="Nucleotide-bd_a/b_plait_sf"/>
</dbReference>
<dbReference type="InterPro" id="IPR035979">
    <property type="entry name" value="RBD_domain_sf"/>
</dbReference>
<dbReference type="InterPro" id="IPR000504">
    <property type="entry name" value="RRM_dom"/>
</dbReference>
<dbReference type="InterPro" id="IPR032297">
    <property type="entry name" value="Torus"/>
</dbReference>
<dbReference type="InterPro" id="IPR000571">
    <property type="entry name" value="Znf_CCCH"/>
</dbReference>
<dbReference type="InterPro" id="IPR036855">
    <property type="entry name" value="Znf_CCCH_sf"/>
</dbReference>
<dbReference type="PANTHER" id="PTHR14089:SF2">
    <property type="entry name" value="PRE-MRNA-SPLICING FACTOR CWC2"/>
    <property type="match status" value="1"/>
</dbReference>
<dbReference type="PANTHER" id="PTHR14089">
    <property type="entry name" value="PRE-MRNA-SPLICING FACTOR RBM22"/>
    <property type="match status" value="1"/>
</dbReference>
<dbReference type="Pfam" id="PF00076">
    <property type="entry name" value="RRM_1"/>
    <property type="match status" value="1"/>
</dbReference>
<dbReference type="Pfam" id="PF16131">
    <property type="entry name" value="Torus"/>
    <property type="match status" value="1"/>
</dbReference>
<dbReference type="SMART" id="SM00360">
    <property type="entry name" value="RRM"/>
    <property type="match status" value="1"/>
</dbReference>
<dbReference type="SUPFAM" id="SSF90229">
    <property type="entry name" value="CCCH zinc finger"/>
    <property type="match status" value="1"/>
</dbReference>
<dbReference type="SUPFAM" id="SSF54928">
    <property type="entry name" value="RNA-binding domain, RBD"/>
    <property type="match status" value="1"/>
</dbReference>
<dbReference type="PROSITE" id="PS50102">
    <property type="entry name" value="RRM"/>
    <property type="match status" value="1"/>
</dbReference>
<dbReference type="PROSITE" id="PS50103">
    <property type="entry name" value="ZF_C3H1"/>
    <property type="match status" value="1"/>
</dbReference>
<protein>
    <recommendedName>
        <fullName>Pre-mRNA-splicing factor cwc2</fullName>
    </recommendedName>
</protein>
<sequence length="414" mass="45526">MAETAVIDPPHATEPTSLPTESADPSGPAPSDENALTQPSESAVTATTDADGTQKKTKKIIRRKRRPARPQVDPATLKSEPPPQTGTVFNIWYNKWSGGDREDKYLSKHAAPSRCNIAKDSGYTRADKVPGSYFCLFFARGVCPKGHECEYLHRLPTLHDLFNPNVDCFGRDKFSDYRDDMGGVGSFTRQNRTLYVGRIHVTDDIEEVVSRHFAEWGQIDRIRVLTSRGVAFVTYTNEANAQFAKEAMAHQSLDHNEILNVRWATVDPNPLAQKREARRLEEQAAEAVRRALPAEFVAELEGRDPEARKKKKIEGSFGLEGYEAPDDVWYARTKELEDARKAGQLEAPEQHLMIEPAPSSSSAALPSQSEDTGIFSNSTVAALRGLAGGNVTTQKAPVNSGGPLVAYGSDDDSD</sequence>
<organism>
    <name type="scientific">Aspergillus fumigatus (strain ATCC MYA-4609 / CBS 101355 / FGSC A1100 / Af293)</name>
    <name type="common">Neosartorya fumigata</name>
    <dbReference type="NCBI Taxonomy" id="330879"/>
    <lineage>
        <taxon>Eukaryota</taxon>
        <taxon>Fungi</taxon>
        <taxon>Dikarya</taxon>
        <taxon>Ascomycota</taxon>
        <taxon>Pezizomycotina</taxon>
        <taxon>Eurotiomycetes</taxon>
        <taxon>Eurotiomycetidae</taxon>
        <taxon>Eurotiales</taxon>
        <taxon>Aspergillaceae</taxon>
        <taxon>Aspergillus</taxon>
        <taxon>Aspergillus subgen. Fumigati</taxon>
    </lineage>
</organism>
<keyword id="KW-0131">Cell cycle</keyword>
<keyword id="KW-0479">Metal-binding</keyword>
<keyword id="KW-0507">mRNA processing</keyword>
<keyword id="KW-0508">mRNA splicing</keyword>
<keyword id="KW-0539">Nucleus</keyword>
<keyword id="KW-1185">Reference proteome</keyword>
<keyword id="KW-0694">RNA-binding</keyword>
<keyword id="KW-0747">Spliceosome</keyword>
<keyword id="KW-0862">Zinc</keyword>
<keyword id="KW-0863">Zinc-finger</keyword>
<gene>
    <name type="primary">cwc2</name>
    <name type="ORF">AFUA_5G06760</name>
</gene>
<evidence type="ECO:0000250" key="1"/>
<evidence type="ECO:0000255" key="2">
    <source>
        <dbReference type="PROSITE-ProRule" id="PRU00176"/>
    </source>
</evidence>
<evidence type="ECO:0000255" key="3">
    <source>
        <dbReference type="PROSITE-ProRule" id="PRU00723"/>
    </source>
</evidence>
<evidence type="ECO:0000256" key="4">
    <source>
        <dbReference type="SAM" id="MobiDB-lite"/>
    </source>
</evidence>
<evidence type="ECO:0000305" key="5"/>
<name>CWC2_ASPFU</name>
<feature type="chain" id="PRO_0000081540" description="Pre-mRNA-splicing factor cwc2">
    <location>
        <begin position="1"/>
        <end position="414"/>
    </location>
</feature>
<feature type="domain" description="RRM" evidence="2">
    <location>
        <begin position="192"/>
        <end position="266"/>
    </location>
</feature>
<feature type="zinc finger region" description="C3H1-type" evidence="3">
    <location>
        <begin position="130"/>
        <end position="156"/>
    </location>
</feature>
<feature type="region of interest" description="Disordered" evidence="4">
    <location>
        <begin position="1"/>
        <end position="86"/>
    </location>
</feature>
<feature type="region of interest" description="Disordered" evidence="4">
    <location>
        <begin position="351"/>
        <end position="372"/>
    </location>
</feature>
<feature type="region of interest" description="Disordered" evidence="4">
    <location>
        <begin position="390"/>
        <end position="414"/>
    </location>
</feature>
<feature type="compositionally biased region" description="Polar residues" evidence="4">
    <location>
        <begin position="34"/>
        <end position="51"/>
    </location>
</feature>
<feature type="compositionally biased region" description="Basic residues" evidence="4">
    <location>
        <begin position="55"/>
        <end position="68"/>
    </location>
</feature>
<feature type="compositionally biased region" description="Low complexity" evidence="4">
    <location>
        <begin position="356"/>
        <end position="369"/>
    </location>
</feature>
<comment type="function">
    <text evidence="1">Involved in the first step of pre-mRNA splicing. Required for cell growth and cell cycle control. Plays a role in the levels of the U1, U4, U5 and U6 snRNAs and the maintenance of the U4/U6 snRNA complex. May provide the link between the 'nineteen complex' NTC spliceosome protein complex and the spliceosome through the U6 snRNA. Associates predominantly with U6 snRNAs in assembled active spliceosomes. Binds directly to the internal stem-loop (ISL) domain of the U6 snRNA and to the pre-mRNA intron near the 5' splice site during the activation and catalytic phases of the spliceosome cycle (By similarity).</text>
</comment>
<comment type="subunit">
    <text evidence="1">Associated with the spliceosome.</text>
</comment>
<comment type="subcellular location">
    <subcellularLocation>
        <location evidence="1">Nucleus</location>
    </subcellularLocation>
</comment>
<comment type="domain">
    <text evidence="1">The C-terminal RRM domain and the zinc finger motif are necessary for RNA-binding.</text>
</comment>
<comment type="similarity">
    <text evidence="5">Belongs to the RRM CWC2 family.</text>
</comment>
<reference key="1">
    <citation type="journal article" date="2005" name="Nature">
        <title>Genomic sequence of the pathogenic and allergenic filamentous fungus Aspergillus fumigatus.</title>
        <authorList>
            <person name="Nierman W.C."/>
            <person name="Pain A."/>
            <person name="Anderson M.J."/>
            <person name="Wortman J.R."/>
            <person name="Kim H.S."/>
            <person name="Arroyo J."/>
            <person name="Berriman M."/>
            <person name="Abe K."/>
            <person name="Archer D.B."/>
            <person name="Bermejo C."/>
            <person name="Bennett J.W."/>
            <person name="Bowyer P."/>
            <person name="Chen D."/>
            <person name="Collins M."/>
            <person name="Coulsen R."/>
            <person name="Davies R."/>
            <person name="Dyer P.S."/>
            <person name="Farman M.L."/>
            <person name="Fedorova N."/>
            <person name="Fedorova N.D."/>
            <person name="Feldblyum T.V."/>
            <person name="Fischer R."/>
            <person name="Fosker N."/>
            <person name="Fraser A."/>
            <person name="Garcia J.L."/>
            <person name="Garcia M.J."/>
            <person name="Goble A."/>
            <person name="Goldman G.H."/>
            <person name="Gomi K."/>
            <person name="Griffith-Jones S."/>
            <person name="Gwilliam R."/>
            <person name="Haas B.J."/>
            <person name="Haas H."/>
            <person name="Harris D.E."/>
            <person name="Horiuchi H."/>
            <person name="Huang J."/>
            <person name="Humphray S."/>
            <person name="Jimenez J."/>
            <person name="Keller N."/>
            <person name="Khouri H."/>
            <person name="Kitamoto K."/>
            <person name="Kobayashi T."/>
            <person name="Konzack S."/>
            <person name="Kulkarni R."/>
            <person name="Kumagai T."/>
            <person name="Lafton A."/>
            <person name="Latge J.-P."/>
            <person name="Li W."/>
            <person name="Lord A."/>
            <person name="Lu C."/>
            <person name="Majoros W.H."/>
            <person name="May G.S."/>
            <person name="Miller B.L."/>
            <person name="Mohamoud Y."/>
            <person name="Molina M."/>
            <person name="Monod M."/>
            <person name="Mouyna I."/>
            <person name="Mulligan S."/>
            <person name="Murphy L.D."/>
            <person name="O'Neil S."/>
            <person name="Paulsen I."/>
            <person name="Penalva M.A."/>
            <person name="Pertea M."/>
            <person name="Price C."/>
            <person name="Pritchard B.L."/>
            <person name="Quail M.A."/>
            <person name="Rabbinowitsch E."/>
            <person name="Rawlins N."/>
            <person name="Rajandream M.A."/>
            <person name="Reichard U."/>
            <person name="Renauld H."/>
            <person name="Robson G.D."/>
            <person name="Rodriguez de Cordoba S."/>
            <person name="Rodriguez-Pena J.M."/>
            <person name="Ronning C.M."/>
            <person name="Rutter S."/>
            <person name="Salzberg S.L."/>
            <person name="Sanchez M."/>
            <person name="Sanchez-Ferrero J.C."/>
            <person name="Saunders D."/>
            <person name="Seeger K."/>
            <person name="Squares R."/>
            <person name="Squares S."/>
            <person name="Takeuchi M."/>
            <person name="Tekaia F."/>
            <person name="Turner G."/>
            <person name="Vazquez de Aldana C.R."/>
            <person name="Weidman J."/>
            <person name="White O."/>
            <person name="Woodward J.R."/>
            <person name="Yu J.-H."/>
            <person name="Fraser C.M."/>
            <person name="Galagan J.E."/>
            <person name="Asai K."/>
            <person name="Machida M."/>
            <person name="Hall N."/>
            <person name="Barrell B.G."/>
            <person name="Denning D.W."/>
        </authorList>
    </citation>
    <scope>NUCLEOTIDE SEQUENCE [LARGE SCALE GENOMIC DNA]</scope>
    <source>
        <strain>ATCC MYA-4609 / CBS 101355 / FGSC A1100 / Af293</strain>
    </source>
</reference>
<accession>Q4WU07</accession>